<gene>
    <name evidence="1" type="primary">trpD</name>
    <name type="ordered locus">M1425_1330</name>
</gene>
<reference key="1">
    <citation type="journal article" date="2009" name="Proc. Natl. Acad. Sci. U.S.A.">
        <title>Biogeography of the Sulfolobus islandicus pan-genome.</title>
        <authorList>
            <person name="Reno M.L."/>
            <person name="Held N.L."/>
            <person name="Fields C.J."/>
            <person name="Burke P.V."/>
            <person name="Whitaker R.J."/>
        </authorList>
    </citation>
    <scope>NUCLEOTIDE SEQUENCE [LARGE SCALE GENOMIC DNA]</scope>
    <source>
        <strain>M.14.25 / Kamchatka #1</strain>
    </source>
</reference>
<feature type="chain" id="PRO_1000204192" description="Anthranilate phosphoribosyltransferase">
    <location>
        <begin position="1"/>
        <end position="345"/>
    </location>
</feature>
<feature type="binding site" evidence="1">
    <location>
        <position position="79"/>
    </location>
    <ligand>
        <name>5-phospho-alpha-D-ribose 1-diphosphate</name>
        <dbReference type="ChEBI" id="CHEBI:58017"/>
    </ligand>
</feature>
<feature type="binding site" evidence="1">
    <location>
        <position position="79"/>
    </location>
    <ligand>
        <name>anthranilate</name>
        <dbReference type="ChEBI" id="CHEBI:16567"/>
        <label>1</label>
    </ligand>
</feature>
<feature type="binding site" evidence="1">
    <location>
        <begin position="82"/>
        <end position="83"/>
    </location>
    <ligand>
        <name>5-phospho-alpha-D-ribose 1-diphosphate</name>
        <dbReference type="ChEBI" id="CHEBI:58017"/>
    </ligand>
</feature>
<feature type="binding site" evidence="1">
    <location>
        <position position="87"/>
    </location>
    <ligand>
        <name>5-phospho-alpha-D-ribose 1-diphosphate</name>
        <dbReference type="ChEBI" id="CHEBI:58017"/>
    </ligand>
</feature>
<feature type="binding site" evidence="1">
    <location>
        <begin position="89"/>
        <end position="92"/>
    </location>
    <ligand>
        <name>5-phospho-alpha-D-ribose 1-diphosphate</name>
        <dbReference type="ChEBI" id="CHEBI:58017"/>
    </ligand>
</feature>
<feature type="binding site" evidence="1">
    <location>
        <position position="91"/>
    </location>
    <ligand>
        <name>Mg(2+)</name>
        <dbReference type="ChEBI" id="CHEBI:18420"/>
        <label>1</label>
    </ligand>
</feature>
<feature type="binding site" evidence="1">
    <location>
        <begin position="106"/>
        <end position="114"/>
    </location>
    <ligand>
        <name>5-phospho-alpha-D-ribose 1-diphosphate</name>
        <dbReference type="ChEBI" id="CHEBI:58017"/>
    </ligand>
</feature>
<feature type="binding site" evidence="1">
    <location>
        <position position="109"/>
    </location>
    <ligand>
        <name>anthranilate</name>
        <dbReference type="ChEBI" id="CHEBI:16567"/>
        <label>1</label>
    </ligand>
</feature>
<feature type="binding site" evidence="1">
    <location>
        <position position="118"/>
    </location>
    <ligand>
        <name>5-phospho-alpha-D-ribose 1-diphosphate</name>
        <dbReference type="ChEBI" id="CHEBI:58017"/>
    </ligand>
</feature>
<feature type="binding site" evidence="1">
    <location>
        <position position="164"/>
    </location>
    <ligand>
        <name>anthranilate</name>
        <dbReference type="ChEBI" id="CHEBI:16567"/>
        <label>2</label>
    </ligand>
</feature>
<feature type="binding site" evidence="1">
    <location>
        <position position="223"/>
    </location>
    <ligand>
        <name>Mg(2+)</name>
        <dbReference type="ChEBI" id="CHEBI:18420"/>
        <label>2</label>
    </ligand>
</feature>
<feature type="binding site" evidence="1">
    <location>
        <position position="224"/>
    </location>
    <ligand>
        <name>Mg(2+)</name>
        <dbReference type="ChEBI" id="CHEBI:18420"/>
        <label>1</label>
    </ligand>
</feature>
<feature type="binding site" evidence="1">
    <location>
        <position position="224"/>
    </location>
    <ligand>
        <name>Mg(2+)</name>
        <dbReference type="ChEBI" id="CHEBI:18420"/>
        <label>2</label>
    </ligand>
</feature>
<comment type="function">
    <text evidence="1">Catalyzes the transfer of the phosphoribosyl group of 5-phosphorylribose-1-pyrophosphate (PRPP) to anthranilate to yield N-(5'-phosphoribosyl)-anthranilate (PRA).</text>
</comment>
<comment type="catalytic activity">
    <reaction evidence="1">
        <text>N-(5-phospho-beta-D-ribosyl)anthranilate + diphosphate = 5-phospho-alpha-D-ribose 1-diphosphate + anthranilate</text>
        <dbReference type="Rhea" id="RHEA:11768"/>
        <dbReference type="ChEBI" id="CHEBI:16567"/>
        <dbReference type="ChEBI" id="CHEBI:18277"/>
        <dbReference type="ChEBI" id="CHEBI:33019"/>
        <dbReference type="ChEBI" id="CHEBI:58017"/>
        <dbReference type="EC" id="2.4.2.18"/>
    </reaction>
</comment>
<comment type="cofactor">
    <cofactor evidence="1">
        <name>Mg(2+)</name>
        <dbReference type="ChEBI" id="CHEBI:18420"/>
    </cofactor>
    <text evidence="1">Binds 2 magnesium ions per monomer.</text>
</comment>
<comment type="pathway">
    <text evidence="1">Amino-acid biosynthesis; L-tryptophan biosynthesis; L-tryptophan from chorismate: step 2/5.</text>
</comment>
<comment type="subunit">
    <text evidence="1">Homodimer.</text>
</comment>
<comment type="similarity">
    <text evidence="1">Belongs to the anthranilate phosphoribosyltransferase family.</text>
</comment>
<dbReference type="EC" id="2.4.2.18" evidence="1"/>
<dbReference type="EMBL" id="CP001400">
    <property type="protein sequence ID" value="ACP38084.1"/>
    <property type="molecule type" value="Genomic_DNA"/>
</dbReference>
<dbReference type="RefSeq" id="WP_012711335.1">
    <property type="nucleotide sequence ID" value="NC_012588.1"/>
</dbReference>
<dbReference type="SMR" id="C3MV89"/>
<dbReference type="GeneID" id="84061639"/>
<dbReference type="KEGG" id="sia:M1425_1330"/>
<dbReference type="HOGENOM" id="CLU_034315_2_1_2"/>
<dbReference type="UniPathway" id="UPA00035">
    <property type="reaction ID" value="UER00041"/>
</dbReference>
<dbReference type="Proteomes" id="UP000001350">
    <property type="component" value="Chromosome"/>
</dbReference>
<dbReference type="GO" id="GO:0005829">
    <property type="term" value="C:cytosol"/>
    <property type="evidence" value="ECO:0007669"/>
    <property type="project" value="TreeGrafter"/>
</dbReference>
<dbReference type="GO" id="GO:0004048">
    <property type="term" value="F:anthranilate phosphoribosyltransferase activity"/>
    <property type="evidence" value="ECO:0007669"/>
    <property type="project" value="UniProtKB-UniRule"/>
</dbReference>
<dbReference type="GO" id="GO:0000287">
    <property type="term" value="F:magnesium ion binding"/>
    <property type="evidence" value="ECO:0007669"/>
    <property type="project" value="UniProtKB-UniRule"/>
</dbReference>
<dbReference type="GO" id="GO:0000162">
    <property type="term" value="P:L-tryptophan biosynthetic process"/>
    <property type="evidence" value="ECO:0007669"/>
    <property type="project" value="UniProtKB-UniRule"/>
</dbReference>
<dbReference type="FunFam" id="3.40.1030.10:FF:000002">
    <property type="entry name" value="Anthranilate phosphoribosyltransferase"/>
    <property type="match status" value="1"/>
</dbReference>
<dbReference type="Gene3D" id="3.40.1030.10">
    <property type="entry name" value="Nucleoside phosphorylase/phosphoribosyltransferase catalytic domain"/>
    <property type="match status" value="1"/>
</dbReference>
<dbReference type="Gene3D" id="1.20.970.10">
    <property type="entry name" value="Transferase, Pyrimidine Nucleoside Phosphorylase, Chain C"/>
    <property type="match status" value="1"/>
</dbReference>
<dbReference type="HAMAP" id="MF_00211">
    <property type="entry name" value="TrpD"/>
    <property type="match status" value="1"/>
</dbReference>
<dbReference type="InterPro" id="IPR005940">
    <property type="entry name" value="Anthranilate_Pribosyl_Tfrase"/>
</dbReference>
<dbReference type="InterPro" id="IPR000312">
    <property type="entry name" value="Glycosyl_Trfase_fam3"/>
</dbReference>
<dbReference type="InterPro" id="IPR017459">
    <property type="entry name" value="Glycosyl_Trfase_fam3_N_dom"/>
</dbReference>
<dbReference type="InterPro" id="IPR036320">
    <property type="entry name" value="Glycosyl_Trfase_fam3_N_dom_sf"/>
</dbReference>
<dbReference type="InterPro" id="IPR035902">
    <property type="entry name" value="Nuc_phospho_transferase"/>
</dbReference>
<dbReference type="NCBIfam" id="TIGR01245">
    <property type="entry name" value="trpD"/>
    <property type="match status" value="1"/>
</dbReference>
<dbReference type="PANTHER" id="PTHR43285">
    <property type="entry name" value="ANTHRANILATE PHOSPHORIBOSYLTRANSFERASE"/>
    <property type="match status" value="1"/>
</dbReference>
<dbReference type="PANTHER" id="PTHR43285:SF2">
    <property type="entry name" value="ANTHRANILATE PHOSPHORIBOSYLTRANSFERASE"/>
    <property type="match status" value="1"/>
</dbReference>
<dbReference type="Pfam" id="PF02885">
    <property type="entry name" value="Glycos_trans_3N"/>
    <property type="match status" value="1"/>
</dbReference>
<dbReference type="Pfam" id="PF00591">
    <property type="entry name" value="Glycos_transf_3"/>
    <property type="match status" value="1"/>
</dbReference>
<dbReference type="SUPFAM" id="SSF52418">
    <property type="entry name" value="Nucleoside phosphorylase/phosphoribosyltransferase catalytic domain"/>
    <property type="match status" value="1"/>
</dbReference>
<dbReference type="SUPFAM" id="SSF47648">
    <property type="entry name" value="Nucleoside phosphorylase/phosphoribosyltransferase N-terminal domain"/>
    <property type="match status" value="1"/>
</dbReference>
<protein>
    <recommendedName>
        <fullName evidence="1">Anthranilate phosphoribosyltransferase</fullName>
        <ecNumber evidence="1">2.4.2.18</ecNumber>
    </recommendedName>
</protein>
<sequence length="345" mass="37595">MNINDILKKLINKSDLEIDEAEELAKAIIRGEVPEILVSAILVALRMKGESKNEIVGFARAMRELAIKIDVPNAIDTAGTGGDGLGTVNVSTASAILLSLINPVAKHGNRAVSGKSGSADVLEALGYNIIVPPERAKELVHKTNFVFLFAQYYHPAMKNVANVRKTLGIRTIFNILGPLTNPANAKYQLMGVFSKDHLDLLSKSAYELDFNKVILVHGEPGIDEVSPIGKTFMKIVSKRGIEEVKFDVTDFGISSIPIDKLIVNSAEDSAIKIVRAFLGKDEHVAEFIKINTAVALFALDKVSDFKEGYEYAKYLIENSVNKLNEIISLNGDLTKLKTIMVKSSG</sequence>
<keyword id="KW-0028">Amino-acid biosynthesis</keyword>
<keyword id="KW-0057">Aromatic amino acid biosynthesis</keyword>
<keyword id="KW-0328">Glycosyltransferase</keyword>
<keyword id="KW-0460">Magnesium</keyword>
<keyword id="KW-0479">Metal-binding</keyword>
<keyword id="KW-0808">Transferase</keyword>
<keyword id="KW-0822">Tryptophan biosynthesis</keyword>
<proteinExistence type="inferred from homology"/>
<accession>C3MV89</accession>
<name>TRPD_SACI4</name>
<evidence type="ECO:0000255" key="1">
    <source>
        <dbReference type="HAMAP-Rule" id="MF_00211"/>
    </source>
</evidence>
<organism>
    <name type="scientific">Saccharolobus islandicus (strain M.14.25 / Kamchatka #1)</name>
    <name type="common">Sulfolobus islandicus</name>
    <dbReference type="NCBI Taxonomy" id="427317"/>
    <lineage>
        <taxon>Archaea</taxon>
        <taxon>Thermoproteota</taxon>
        <taxon>Thermoprotei</taxon>
        <taxon>Sulfolobales</taxon>
        <taxon>Sulfolobaceae</taxon>
        <taxon>Saccharolobus</taxon>
    </lineage>
</organism>